<proteinExistence type="inferred from homology"/>
<gene>
    <name type="ordered locus">Rmet_0111</name>
</gene>
<evidence type="ECO:0000255" key="1">
    <source>
        <dbReference type="HAMAP-Rule" id="MF_00612"/>
    </source>
</evidence>
<name>Y111_CUPMC</name>
<accession>Q1LS79</accession>
<comment type="similarity">
    <text evidence="1">Belongs to the UPF0225 family.</text>
</comment>
<dbReference type="EMBL" id="CP000352">
    <property type="protein sequence ID" value="ABF06997.1"/>
    <property type="molecule type" value="Genomic_DNA"/>
</dbReference>
<dbReference type="RefSeq" id="WP_011515031.1">
    <property type="nucleotide sequence ID" value="NC_007973.1"/>
</dbReference>
<dbReference type="SMR" id="Q1LS79"/>
<dbReference type="STRING" id="266264.Rmet_0111"/>
<dbReference type="KEGG" id="rme:Rmet_0111"/>
<dbReference type="eggNOG" id="COG3012">
    <property type="taxonomic scope" value="Bacteria"/>
</dbReference>
<dbReference type="HOGENOM" id="CLU_099590_2_0_4"/>
<dbReference type="Proteomes" id="UP000002429">
    <property type="component" value="Chromosome"/>
</dbReference>
<dbReference type="Gene3D" id="3.10.450.50">
    <property type="match status" value="1"/>
</dbReference>
<dbReference type="HAMAP" id="MF_00612">
    <property type="entry name" value="UPF0225"/>
    <property type="match status" value="1"/>
</dbReference>
<dbReference type="InterPro" id="IPR032710">
    <property type="entry name" value="NTF2-like_dom_sf"/>
</dbReference>
<dbReference type="InterPro" id="IPR023006">
    <property type="entry name" value="UPF0225"/>
</dbReference>
<dbReference type="InterPro" id="IPR048469">
    <property type="entry name" value="YchJ-like_M"/>
</dbReference>
<dbReference type="NCBIfam" id="NF002502">
    <property type="entry name" value="PRK01842.1"/>
    <property type="match status" value="1"/>
</dbReference>
<dbReference type="Pfam" id="PF17775">
    <property type="entry name" value="YchJ_M-like"/>
    <property type="match status" value="1"/>
</dbReference>
<dbReference type="SUPFAM" id="SSF54427">
    <property type="entry name" value="NTF2-like"/>
    <property type="match status" value="1"/>
</dbReference>
<organism>
    <name type="scientific">Cupriavidus metallidurans (strain ATCC 43123 / DSM 2839 / NBRC 102507 / CH34)</name>
    <name type="common">Ralstonia metallidurans</name>
    <dbReference type="NCBI Taxonomy" id="266264"/>
    <lineage>
        <taxon>Bacteria</taxon>
        <taxon>Pseudomonadati</taxon>
        <taxon>Pseudomonadota</taxon>
        <taxon>Betaproteobacteria</taxon>
        <taxon>Burkholderiales</taxon>
        <taxon>Burkholderiaceae</taxon>
        <taxon>Cupriavidus</taxon>
    </lineage>
</organism>
<protein>
    <recommendedName>
        <fullName evidence="1">UPF0225 protein Rmet_0111</fullName>
    </recommendedName>
</protein>
<keyword id="KW-1185">Reference proteome</keyword>
<feature type="chain" id="PRO_1000056735" description="UPF0225 protein Rmet_0111">
    <location>
        <begin position="1"/>
        <end position="141"/>
    </location>
</feature>
<reference key="1">
    <citation type="journal article" date="2010" name="PLoS ONE">
        <title>The complete genome sequence of Cupriavidus metallidurans strain CH34, a master survivalist in harsh and anthropogenic environments.</title>
        <authorList>
            <person name="Janssen P.J."/>
            <person name="Van Houdt R."/>
            <person name="Moors H."/>
            <person name="Monsieurs P."/>
            <person name="Morin N."/>
            <person name="Michaux A."/>
            <person name="Benotmane M.A."/>
            <person name="Leys N."/>
            <person name="Vallaeys T."/>
            <person name="Lapidus A."/>
            <person name="Monchy S."/>
            <person name="Medigue C."/>
            <person name="Taghavi S."/>
            <person name="McCorkle S."/>
            <person name="Dunn J."/>
            <person name="van der Lelie D."/>
            <person name="Mergeay M."/>
        </authorList>
    </citation>
    <scope>NUCLEOTIDE SEQUENCE [LARGE SCALE GENOMIC DNA]</scope>
    <source>
        <strain>ATCC 43123 / DSM 2839 / NBRC 102507 / CH34</strain>
    </source>
</reference>
<sequence length="141" mass="15462">MTNKGRAGTGPAPCPCGNGAYDTCCGRFHRGEASPPTAEALMRSRYSAYVLGDVSWLRQTWHASTCPPDLSADPGTNWLGLTVKSHAQQDATHATVEFVARYKVGGRAHRLHELSRFVFESREPGEASRWLYVDGDLREPA</sequence>